<sequence length="771" mass="85050">MSVHATDAKPPGPSPADQLLDGLNPQQRQAVVHEGSPLLIVAGAGSGKTAVLTRRIAYLMAARGVGVGQILAITFTNKAAAEMRERVVGLVGEKARYMWVSTFHSTCVRILRNQAALIEGLNSNFSIYDADDSRRLLQMVGRDLGLDIKRYSPRLLANAISNLKNELIDPHQALAGLTEDSDDLARAVASVYDEYQRRLRAANALDFDDLIGETVAVLQAFPQIAQYYRRRFRHVLVDEYQDTNHAQYVLVRELVGRDSNDGIPPGELCVVGDADQSIYAFRGATIRNIEDFERDYPDTRTILLEQNYRSTQNILSAANSVIARNAGRREKRLWTDAGAGELIVGYVADNEHDEARFVAEEIDALAEGSEITYNDVAVFYRTNNSSRSLEEVLIRAGIPYKVVGGVRFYERKEIRDIVAYLRVLDNPGDAVSLRRILNTPRRGIGDRAEACVAVYAENTGVGFGDALVAAAQGKVPMLNTRAEKAIAGFVEMFDELRGRLDDDLGELVEAVLERTGYRRELEASTDPQELARLDNLNELVSVAHEFSTDRENAAALGPDDEDVPDTGVLADFLERVSLVADADEIPEHGAGVVTLMTLHTAKGLEFPVVFVTGWEDGMFPHMRALDNPTELSEERRLAYVGITRARQRLYVSRAIVRSSWGQPMLNPESRFLREIPQELIDWRRTAPKPSFSAPVSGAGRFGSARPSPTRSGASRRPLLVLQVGDRVTHDKYGLGRVEEVSGVGESAMSLIDFGSSGRVKLMHNHAPVTKL</sequence>
<proteinExistence type="evidence at protein level"/>
<reference key="1">
    <citation type="journal article" date="1998" name="Nature">
        <title>Deciphering the biology of Mycobacterium tuberculosis from the complete genome sequence.</title>
        <authorList>
            <person name="Cole S.T."/>
            <person name="Brosch R."/>
            <person name="Parkhill J."/>
            <person name="Garnier T."/>
            <person name="Churcher C.M."/>
            <person name="Harris D.E."/>
            <person name="Gordon S.V."/>
            <person name="Eiglmeier K."/>
            <person name="Gas S."/>
            <person name="Barry C.E. III"/>
            <person name="Tekaia F."/>
            <person name="Badcock K."/>
            <person name="Basham D."/>
            <person name="Brown D."/>
            <person name="Chillingworth T."/>
            <person name="Connor R."/>
            <person name="Davies R.M."/>
            <person name="Devlin K."/>
            <person name="Feltwell T."/>
            <person name="Gentles S."/>
            <person name="Hamlin N."/>
            <person name="Holroyd S."/>
            <person name="Hornsby T."/>
            <person name="Jagels K."/>
            <person name="Krogh A."/>
            <person name="McLean J."/>
            <person name="Moule S."/>
            <person name="Murphy L.D."/>
            <person name="Oliver S."/>
            <person name="Osborne J."/>
            <person name="Quail M.A."/>
            <person name="Rajandream M.A."/>
            <person name="Rogers J."/>
            <person name="Rutter S."/>
            <person name="Seeger K."/>
            <person name="Skelton S."/>
            <person name="Squares S."/>
            <person name="Squares R."/>
            <person name="Sulston J.E."/>
            <person name="Taylor K."/>
            <person name="Whitehead S."/>
            <person name="Barrell B.G."/>
        </authorList>
    </citation>
    <scope>NUCLEOTIDE SEQUENCE [LARGE SCALE GENOMIC DNA]</scope>
    <source>
        <strain>ATCC 25618 / H37Rv</strain>
    </source>
</reference>
<reference key="2">
    <citation type="journal article" date="2007" name="J. Bacteriol.">
        <title>Characterization of the helicase activity and substrate specificity of Mycobacterium tuberculosis UvrD.</title>
        <authorList>
            <person name="Curti E."/>
            <person name="Smerdon S.J."/>
            <person name="Davis E.O."/>
        </authorList>
    </citation>
    <scope>FUNCTION AS A HELICASE</scope>
    <scope>BIOPHYSICOCHEMICAL PROPERTIES</scope>
    <scope>COFACTOR</scope>
    <scope>ACTIVITY REGULATION</scope>
    <scope>SUBUNIT</scope>
    <source>
        <strain>ATCC 25618 / H37Rv</strain>
    </source>
</reference>
<reference key="3">
    <citation type="journal article" date="2010" name="Biochemistry">
        <title>Mycobacterium tuberculosis UvrD1 and UvrA proteins suppress DNA strand exchange promoted by cognate and noncognate RecA proteins.</title>
        <authorList>
            <person name="Singh P."/>
            <person name="Patil K.N."/>
            <person name="Khanduja J.S."/>
            <person name="Kumar P.S."/>
            <person name="Williams A."/>
            <person name="Rossi F."/>
            <person name="Rizzi M."/>
            <person name="Davis E.O."/>
            <person name="Muniyappa K."/>
        </authorList>
    </citation>
    <scope>FUNCTION AS AN ATPASE</scope>
    <scope>FUNCTION IN DNA UNWINDING</scope>
    <scope>FUNCTION IN INHIBITION OF DNA STRAND EXCHANGE</scope>
    <scope>INTERACTION WITH RECA</scope>
    <scope>MUTAGENESIS OF GLN-276</scope>
    <source>
        <strain>ATCC 25618 / H37Rv</strain>
    </source>
</reference>
<reference key="4">
    <citation type="journal article" date="2011" name="Mol. Cell. Proteomics">
        <title>Proteogenomic analysis of Mycobacterium tuberculosis by high resolution mass spectrometry.</title>
        <authorList>
            <person name="Kelkar D.S."/>
            <person name="Kumar D."/>
            <person name="Kumar P."/>
            <person name="Balakrishnan L."/>
            <person name="Muthusamy B."/>
            <person name="Yadav A.K."/>
            <person name="Shrivastava P."/>
            <person name="Marimuthu A."/>
            <person name="Anand S."/>
            <person name="Sundaram H."/>
            <person name="Kingsbury R."/>
            <person name="Harsha H.C."/>
            <person name="Nair B."/>
            <person name="Prasad T.S."/>
            <person name="Chauhan D.S."/>
            <person name="Katoch K."/>
            <person name="Katoch V.M."/>
            <person name="Kumar P."/>
            <person name="Chaerkady R."/>
            <person name="Ramachandran S."/>
            <person name="Dash D."/>
            <person name="Pandey A."/>
        </authorList>
    </citation>
    <scope>ACETYLATION [LARGE SCALE ANALYSIS] AT SER-2</scope>
    <scope>CLEAVAGE OF INITIATOR METHIONINE [LARGE SCALE ANALYSIS]</scope>
    <scope>IDENTIFICATION BY MASS SPECTROMETRY [LARGE SCALE ANALYSIS]</scope>
    <source>
        <strain>ATCC 25618 / H37Rv</strain>
    </source>
</reference>
<reference key="5">
    <citation type="journal article" date="2012" name="J. Bacteriol.">
        <title>Important role for Mycobacterium tuberculosis UvrD1 in pathogenesis and persistence apart from its function in nucleotide excision repair.</title>
        <authorList>
            <person name="Houghton J."/>
            <person name="Townsend C."/>
            <person name="Williams A.R."/>
            <person name="Rodgers A."/>
            <person name="Rand L."/>
            <person name="Walker K.B."/>
            <person name="Bottger E.C."/>
            <person name="Springer B."/>
            <person name="Davis E.O."/>
        </authorList>
    </citation>
    <scope>FUNCTION</scope>
    <scope>INDUCTION</scope>
    <scope>DISRUPTION PHENOTYPE</scope>
    <source>
        <strain>ATCC 25618 / H37Rv</strain>
    </source>
</reference>
<protein>
    <recommendedName>
        <fullName>ATP-dependent DNA helicase UvrD1</fullName>
        <ecNumber>5.6.2.4</ecNumber>
    </recommendedName>
    <alternativeName>
        <fullName evidence="8">DNA 3'-5' helicase UvrD1</fullName>
    </alternativeName>
</protein>
<feature type="initiator methionine" description="Removed" evidence="9">
    <location>
        <position position="1"/>
    </location>
</feature>
<feature type="chain" id="PRO_0000102055" description="ATP-dependent DNA helicase UvrD1">
    <location>
        <begin position="2"/>
        <end position="771"/>
    </location>
</feature>
<feature type="domain" description="UvrD-like helicase ATP-binding" evidence="2">
    <location>
        <begin position="21"/>
        <end position="311"/>
    </location>
</feature>
<feature type="domain" description="UvrD-like helicase C-terminal" evidence="3">
    <location>
        <begin position="312"/>
        <end position="603"/>
    </location>
</feature>
<feature type="region of interest" description="Disordered" evidence="4">
    <location>
        <begin position="1"/>
        <end position="21"/>
    </location>
</feature>
<feature type="region of interest" description="Disordered" evidence="4">
    <location>
        <begin position="691"/>
        <end position="716"/>
    </location>
</feature>
<feature type="binding site" evidence="2">
    <location>
        <begin position="45"/>
        <end position="50"/>
    </location>
    <ligand>
        <name>ATP</name>
        <dbReference type="ChEBI" id="CHEBI:30616"/>
    </ligand>
</feature>
<feature type="binding site" evidence="1">
    <location>
        <position position="309"/>
    </location>
    <ligand>
        <name>ATP</name>
        <dbReference type="ChEBI" id="CHEBI:30616"/>
    </ligand>
</feature>
<feature type="modified residue" description="N-acetylserine" evidence="9">
    <location>
        <position position="2"/>
    </location>
</feature>
<feature type="mutagenesis site" description="Loss of ATPase and DNA unwinding, partially inhibits DNA strand exchange." evidence="6">
    <original>Q</original>
    <variation>R</variation>
    <location>
        <position position="276"/>
    </location>
</feature>
<gene>
    <name type="primary">uvrD1</name>
    <name type="synonym">ivrd</name>
    <name type="synonym">pcrA</name>
    <name type="ordered locus">Rv0949</name>
    <name type="ORF">MTCY10D7.25c</name>
</gene>
<keyword id="KW-0002">3D-structure</keyword>
<keyword id="KW-0007">Acetylation</keyword>
<keyword id="KW-0067">ATP-binding</keyword>
<keyword id="KW-0227">DNA damage</keyword>
<keyword id="KW-0234">DNA repair</keyword>
<keyword id="KW-0238">DNA-binding</keyword>
<keyword id="KW-0347">Helicase</keyword>
<keyword id="KW-0378">Hydrolase</keyword>
<keyword id="KW-0413">Isomerase</keyword>
<keyword id="KW-0547">Nucleotide-binding</keyword>
<keyword id="KW-1185">Reference proteome</keyword>
<accession>P9WMQ1</accession>
<accession>L0T870</accession>
<accession>P0A5A3</accession>
<accession>P71561</accession>
<evidence type="ECO:0000250" key="1"/>
<evidence type="ECO:0000255" key="2">
    <source>
        <dbReference type="PROSITE-ProRule" id="PRU00560"/>
    </source>
</evidence>
<evidence type="ECO:0000255" key="3">
    <source>
        <dbReference type="PROSITE-ProRule" id="PRU00617"/>
    </source>
</evidence>
<evidence type="ECO:0000256" key="4">
    <source>
        <dbReference type="SAM" id="MobiDB-lite"/>
    </source>
</evidence>
<evidence type="ECO:0000269" key="5">
    <source>
    </source>
</evidence>
<evidence type="ECO:0000269" key="6">
    <source>
    </source>
</evidence>
<evidence type="ECO:0000269" key="7">
    <source>
    </source>
</evidence>
<evidence type="ECO:0000305" key="8"/>
<evidence type="ECO:0007744" key="9">
    <source>
    </source>
</evidence>
<dbReference type="EC" id="5.6.2.4"/>
<dbReference type="EMBL" id="AL123456">
    <property type="protein sequence ID" value="CCP43697.1"/>
    <property type="molecule type" value="Genomic_DNA"/>
</dbReference>
<dbReference type="PIR" id="C70716">
    <property type="entry name" value="C70716"/>
</dbReference>
<dbReference type="RefSeq" id="WP_003404859.1">
    <property type="nucleotide sequence ID" value="NZ_NVQJ01000001.1"/>
</dbReference>
<dbReference type="RefSeq" id="YP_177772.1">
    <property type="nucleotide sequence ID" value="NC_000962.3"/>
</dbReference>
<dbReference type="PDB" id="9DQS">
    <property type="method" value="X-ray"/>
    <property type="resolution" value="2.59 A"/>
    <property type="chains" value="A/B/C/D/E=719-771"/>
</dbReference>
<dbReference type="PDBsum" id="9DQS"/>
<dbReference type="SASBDB" id="P9WMQ1"/>
<dbReference type="SMR" id="P9WMQ1"/>
<dbReference type="FunCoup" id="P9WMQ1">
    <property type="interactions" value="165"/>
</dbReference>
<dbReference type="STRING" id="83332.Rv0949"/>
<dbReference type="iPTMnet" id="P9WMQ1"/>
<dbReference type="PaxDb" id="83332-Rv0949"/>
<dbReference type="DNASU" id="885442"/>
<dbReference type="GeneID" id="885442"/>
<dbReference type="KEGG" id="mtu:Rv0949"/>
<dbReference type="KEGG" id="mtv:RVBD_0949"/>
<dbReference type="TubercuList" id="Rv0949"/>
<dbReference type="eggNOG" id="COG0210">
    <property type="taxonomic scope" value="Bacteria"/>
</dbReference>
<dbReference type="InParanoid" id="P9WMQ1"/>
<dbReference type="OrthoDB" id="9806690at2"/>
<dbReference type="PhylomeDB" id="P9WMQ1"/>
<dbReference type="Proteomes" id="UP000001584">
    <property type="component" value="Chromosome"/>
</dbReference>
<dbReference type="GO" id="GO:0005829">
    <property type="term" value="C:cytosol"/>
    <property type="evidence" value="ECO:0000318"/>
    <property type="project" value="GO_Central"/>
</dbReference>
<dbReference type="GO" id="GO:0033202">
    <property type="term" value="C:DNA helicase complex"/>
    <property type="evidence" value="ECO:0000314"/>
    <property type="project" value="MTBBASE"/>
</dbReference>
<dbReference type="GO" id="GO:0009274">
    <property type="term" value="C:peptidoglycan-based cell wall"/>
    <property type="evidence" value="ECO:0007005"/>
    <property type="project" value="MTBBASE"/>
</dbReference>
<dbReference type="GO" id="GO:0005886">
    <property type="term" value="C:plasma membrane"/>
    <property type="evidence" value="ECO:0007005"/>
    <property type="project" value="MTBBASE"/>
</dbReference>
<dbReference type="GO" id="GO:0043138">
    <property type="term" value="F:3'-5' DNA helicase activity"/>
    <property type="evidence" value="ECO:0000314"/>
    <property type="project" value="MTBBASE"/>
</dbReference>
<dbReference type="GO" id="GO:0005524">
    <property type="term" value="F:ATP binding"/>
    <property type="evidence" value="ECO:0007669"/>
    <property type="project" value="UniProtKB-KW"/>
</dbReference>
<dbReference type="GO" id="GO:0016887">
    <property type="term" value="F:ATP hydrolysis activity"/>
    <property type="evidence" value="ECO:0000314"/>
    <property type="project" value="MTBBASE"/>
</dbReference>
<dbReference type="GO" id="GO:0008094">
    <property type="term" value="F:ATP-dependent activity, acting on DNA"/>
    <property type="evidence" value="ECO:0000314"/>
    <property type="project" value="MTBBASE"/>
</dbReference>
<dbReference type="GO" id="GO:0032564">
    <property type="term" value="F:dATP binding"/>
    <property type="evidence" value="ECO:0000314"/>
    <property type="project" value="MTBBASE"/>
</dbReference>
<dbReference type="GO" id="GO:0003677">
    <property type="term" value="F:DNA binding"/>
    <property type="evidence" value="ECO:0007669"/>
    <property type="project" value="UniProtKB-KW"/>
</dbReference>
<dbReference type="GO" id="GO:0000287">
    <property type="term" value="F:magnesium ion binding"/>
    <property type="evidence" value="ECO:0000314"/>
    <property type="project" value="MTBBASE"/>
</dbReference>
<dbReference type="GO" id="GO:0006260">
    <property type="term" value="P:DNA replication"/>
    <property type="evidence" value="ECO:0007669"/>
    <property type="project" value="InterPro"/>
</dbReference>
<dbReference type="GO" id="GO:0006302">
    <property type="term" value="P:double-strand break repair"/>
    <property type="evidence" value="ECO:0000315"/>
    <property type="project" value="MTBBASE"/>
</dbReference>
<dbReference type="GO" id="GO:0060543">
    <property type="term" value="P:negative regulation of strand invasion"/>
    <property type="evidence" value="ECO:0000314"/>
    <property type="project" value="MTBBASE"/>
</dbReference>
<dbReference type="GO" id="GO:0000725">
    <property type="term" value="P:recombinational repair"/>
    <property type="evidence" value="ECO:0000318"/>
    <property type="project" value="GO_Central"/>
</dbReference>
<dbReference type="GO" id="GO:0009650">
    <property type="term" value="P:UV protection"/>
    <property type="evidence" value="ECO:0000315"/>
    <property type="project" value="MTBBASE"/>
</dbReference>
<dbReference type="CDD" id="cd17932">
    <property type="entry name" value="DEXQc_UvrD"/>
    <property type="match status" value="1"/>
</dbReference>
<dbReference type="CDD" id="cd18807">
    <property type="entry name" value="SF1_C_UvrD"/>
    <property type="match status" value="1"/>
</dbReference>
<dbReference type="FunFam" id="1.10.10.160:FF:000001">
    <property type="entry name" value="ATP-dependent DNA helicase"/>
    <property type="match status" value="1"/>
</dbReference>
<dbReference type="FunFam" id="1.10.486.10:FF:000003">
    <property type="entry name" value="ATP-dependent DNA helicase"/>
    <property type="match status" value="1"/>
</dbReference>
<dbReference type="Gene3D" id="1.10.10.160">
    <property type="match status" value="1"/>
</dbReference>
<dbReference type="Gene3D" id="3.40.50.300">
    <property type="entry name" value="P-loop containing nucleotide triphosphate hydrolases"/>
    <property type="match status" value="2"/>
</dbReference>
<dbReference type="Gene3D" id="1.10.486.10">
    <property type="entry name" value="PCRA, domain 4"/>
    <property type="match status" value="1"/>
</dbReference>
<dbReference type="InterPro" id="IPR005751">
    <property type="entry name" value="ATP-dep_DNA_helicase_PcrA"/>
</dbReference>
<dbReference type="InterPro" id="IPR013986">
    <property type="entry name" value="DExx_box_DNA_helicase_dom_sf"/>
</dbReference>
<dbReference type="InterPro" id="IPR014017">
    <property type="entry name" value="DNA_helicase_UvrD-like_C"/>
</dbReference>
<dbReference type="InterPro" id="IPR000212">
    <property type="entry name" value="DNA_helicase_UvrD/REP"/>
</dbReference>
<dbReference type="InterPro" id="IPR027417">
    <property type="entry name" value="P-loop_NTPase"/>
</dbReference>
<dbReference type="InterPro" id="IPR014016">
    <property type="entry name" value="UvrD-like_ATP-bd"/>
</dbReference>
<dbReference type="NCBIfam" id="TIGR01073">
    <property type="entry name" value="pcrA"/>
    <property type="match status" value="1"/>
</dbReference>
<dbReference type="PANTHER" id="PTHR11070:SF2">
    <property type="entry name" value="ATP-DEPENDENT DNA HELICASE SRS2"/>
    <property type="match status" value="1"/>
</dbReference>
<dbReference type="PANTHER" id="PTHR11070">
    <property type="entry name" value="UVRD / RECB / PCRA DNA HELICASE FAMILY MEMBER"/>
    <property type="match status" value="1"/>
</dbReference>
<dbReference type="Pfam" id="PF21196">
    <property type="entry name" value="PcrA_UvrD_tudor"/>
    <property type="match status" value="1"/>
</dbReference>
<dbReference type="Pfam" id="PF00580">
    <property type="entry name" value="UvrD-helicase"/>
    <property type="match status" value="1"/>
</dbReference>
<dbReference type="Pfam" id="PF13361">
    <property type="entry name" value="UvrD_C"/>
    <property type="match status" value="1"/>
</dbReference>
<dbReference type="SUPFAM" id="SSF52540">
    <property type="entry name" value="P-loop containing nucleoside triphosphate hydrolases"/>
    <property type="match status" value="1"/>
</dbReference>
<dbReference type="PROSITE" id="PS51198">
    <property type="entry name" value="UVRD_HELICASE_ATP_BIND"/>
    <property type="match status" value="1"/>
</dbReference>
<dbReference type="PROSITE" id="PS51217">
    <property type="entry name" value="UVRD_HELICASE_CTER"/>
    <property type="match status" value="1"/>
</dbReference>
<organism>
    <name type="scientific">Mycobacterium tuberculosis (strain ATCC 25618 / H37Rv)</name>
    <dbReference type="NCBI Taxonomy" id="83332"/>
    <lineage>
        <taxon>Bacteria</taxon>
        <taxon>Bacillati</taxon>
        <taxon>Actinomycetota</taxon>
        <taxon>Actinomycetes</taxon>
        <taxon>Mycobacteriales</taxon>
        <taxon>Mycobacteriaceae</taxon>
        <taxon>Mycobacterium</taxon>
        <taxon>Mycobacterium tuberculosis complex</taxon>
    </lineage>
</organism>
<comment type="function">
    <text evidence="5 6 7">DNA-dependent ATPase, acting on dsDNA with a 3'-ssDNA tail, unwinding with 3'-to 5'-polarity. A minimal tail of 18 nt is required for activity. Also highly efficient on nicked DNA. Involved in the post-incision events of nucleotide excision repair, as well as in nitrosative and oxidative stress response and possibly in persistence in the host. Inhibits RecA-mediated DNA strand exchange; this does not require ATPase activity. When combined with UvrA greatly inhibits RecA-mediated DNA strand exchange.</text>
</comment>
<comment type="catalytic activity">
    <reaction>
        <text>Couples ATP hydrolysis with the unwinding of duplex DNA by translocating in the 3'-5' direction.</text>
        <dbReference type="EC" id="5.6.2.4"/>
    </reaction>
</comment>
<comment type="catalytic activity">
    <reaction>
        <text>ATP + H2O = ADP + phosphate + H(+)</text>
        <dbReference type="Rhea" id="RHEA:13065"/>
        <dbReference type="ChEBI" id="CHEBI:15377"/>
        <dbReference type="ChEBI" id="CHEBI:15378"/>
        <dbReference type="ChEBI" id="CHEBI:30616"/>
        <dbReference type="ChEBI" id="CHEBI:43474"/>
        <dbReference type="ChEBI" id="CHEBI:456216"/>
        <dbReference type="EC" id="5.6.2.4"/>
    </reaction>
</comment>
<comment type="cofactor">
    <cofactor evidence="5">
        <name>Mg(2+)</name>
        <dbReference type="ChEBI" id="CHEBI:18420"/>
    </cofactor>
    <cofactor evidence="5">
        <name>Mn(2+)</name>
        <dbReference type="ChEBI" id="CHEBI:29035"/>
    </cofactor>
    <cofactor evidence="5">
        <name>Cu(2+)</name>
        <dbReference type="ChEBI" id="CHEBI:29036"/>
    </cofactor>
    <cofactor evidence="5">
        <name>Ni(2+)</name>
        <dbReference type="ChEBI" id="CHEBI:49786"/>
    </cofactor>
    <cofactor evidence="5">
        <name>Co(2+)</name>
        <dbReference type="ChEBI" id="CHEBI:48828"/>
    </cofactor>
    <text evidence="5">Mg(2+); Mn(2+), Cu(2+), Ni(2+) or Co(2+) also support ATPase activity.</text>
</comment>
<comment type="activity regulation">
    <text evidence="5">Inhibited by EDTA.</text>
</comment>
<comment type="biophysicochemical properties">
    <kinetics>
        <KM evidence="5">60.2 uM for ATP</KM>
        <text>kcat is 43 sec(-1) with ATP.</text>
    </kinetics>
    <phDependence>
        <text evidence="5">Optimum pH is 7.5.</text>
    </phDependence>
    <temperatureDependence>
        <text evidence="5">Optimum temperature is 37 degrees Celsius.</text>
    </temperatureDependence>
</comment>
<comment type="subunit">
    <text evidence="5 6">Monomer. Interacts with RecA.</text>
</comment>
<comment type="induction">
    <text evidence="7">Up-regulated during mouse infection.</text>
</comment>
<comment type="disruption phenotype">
    <text evidence="7">Forms small colonies, liquid growth is unchanged. Increased sensitivity to UV light, mitomycin C, nitrosative and oxidative stress; a double uvrA/uvrD1 mutant is even more sensitive. Single uvrD1 mutant is strongly attenuated in late stages of mouse infection, the double uvrA/uvrD1 mutant is strongly attenuated at all stages of infection.</text>
</comment>
<comment type="similarity">
    <text evidence="8">Belongs to the helicase family. UvrD subfamily.</text>
</comment>
<name>UVRD1_MYCTU</name>